<gene>
    <name type="primary">mdoG</name>
    <name type="synonym">opgG</name>
    <name type="ordered locus">STM1150</name>
</gene>
<organism>
    <name type="scientific">Salmonella typhimurium (strain LT2 / SGSC1412 / ATCC 700720)</name>
    <dbReference type="NCBI Taxonomy" id="99287"/>
    <lineage>
        <taxon>Bacteria</taxon>
        <taxon>Pseudomonadati</taxon>
        <taxon>Pseudomonadota</taxon>
        <taxon>Gammaproteobacteria</taxon>
        <taxon>Enterobacterales</taxon>
        <taxon>Enterobacteriaceae</taxon>
        <taxon>Salmonella</taxon>
    </lineage>
</organism>
<reference key="1">
    <citation type="journal article" date="2001" name="Nature">
        <title>Complete genome sequence of Salmonella enterica serovar Typhimurium LT2.</title>
        <authorList>
            <person name="McClelland M."/>
            <person name="Sanderson K.E."/>
            <person name="Spieth J."/>
            <person name="Clifton S.W."/>
            <person name="Latreille P."/>
            <person name="Courtney L."/>
            <person name="Porwollik S."/>
            <person name="Ali J."/>
            <person name="Dante M."/>
            <person name="Du F."/>
            <person name="Hou S."/>
            <person name="Layman D."/>
            <person name="Leonard S."/>
            <person name="Nguyen C."/>
            <person name="Scott K."/>
            <person name="Holmes A."/>
            <person name="Grewal N."/>
            <person name="Mulvaney E."/>
            <person name="Ryan E."/>
            <person name="Sun H."/>
            <person name="Florea L."/>
            <person name="Miller W."/>
            <person name="Stoneking T."/>
            <person name="Nhan M."/>
            <person name="Waterston R."/>
            <person name="Wilson R.K."/>
        </authorList>
    </citation>
    <scope>NUCLEOTIDE SEQUENCE [LARGE SCALE GENOMIC DNA]</scope>
    <source>
        <strain>LT2 / SGSC1412 / ATCC 700720</strain>
    </source>
</reference>
<proteinExistence type="inferred from homology"/>
<protein>
    <recommendedName>
        <fullName>Glucans biosynthesis protein G</fullName>
    </recommendedName>
</protein>
<comment type="function">
    <text evidence="1">Involved in the biosynthesis of osmoregulated periplasmic glucans (OPGs).</text>
</comment>
<comment type="pathway">
    <text>Glycan metabolism; osmoregulated periplasmic glucan (OPG) biosynthesis.</text>
</comment>
<comment type="subcellular location">
    <subcellularLocation>
        <location evidence="1">Periplasm</location>
    </subcellularLocation>
</comment>
<comment type="similarity">
    <text evidence="3">Belongs to the OpgD/OpgG family.</text>
</comment>
<evidence type="ECO:0000250" key="1"/>
<evidence type="ECO:0000255" key="2"/>
<evidence type="ECO:0000305" key="3"/>
<dbReference type="EMBL" id="AE006468">
    <property type="protein sequence ID" value="AAL20080.1"/>
    <property type="molecule type" value="Genomic_DNA"/>
</dbReference>
<dbReference type="RefSeq" id="NP_460121.1">
    <property type="nucleotide sequence ID" value="NC_003197.2"/>
</dbReference>
<dbReference type="RefSeq" id="WP_001562609.1">
    <property type="nucleotide sequence ID" value="NC_003197.2"/>
</dbReference>
<dbReference type="SMR" id="P67557"/>
<dbReference type="STRING" id="99287.STM1150"/>
<dbReference type="PaxDb" id="99287-STM1150"/>
<dbReference type="GeneID" id="1252668"/>
<dbReference type="KEGG" id="stm:STM1150"/>
<dbReference type="PATRIC" id="fig|99287.12.peg.1217"/>
<dbReference type="HOGENOM" id="CLU_023403_2_0_6"/>
<dbReference type="PhylomeDB" id="P67557"/>
<dbReference type="BioCyc" id="SENT99287:STM1150-MONOMER"/>
<dbReference type="UniPathway" id="UPA00637"/>
<dbReference type="Proteomes" id="UP000001014">
    <property type="component" value="Chromosome"/>
</dbReference>
<dbReference type="GO" id="GO:0030288">
    <property type="term" value="C:outer membrane-bounded periplasmic space"/>
    <property type="evidence" value="ECO:0000318"/>
    <property type="project" value="GO_Central"/>
</dbReference>
<dbReference type="GO" id="GO:0030246">
    <property type="term" value="F:carbohydrate binding"/>
    <property type="evidence" value="ECO:0007669"/>
    <property type="project" value="InterPro"/>
</dbReference>
<dbReference type="GO" id="GO:0003824">
    <property type="term" value="F:catalytic activity"/>
    <property type="evidence" value="ECO:0007669"/>
    <property type="project" value="InterPro"/>
</dbReference>
<dbReference type="GO" id="GO:0051274">
    <property type="term" value="P:beta-glucan biosynthetic process"/>
    <property type="evidence" value="ECO:0000318"/>
    <property type="project" value="GO_Central"/>
</dbReference>
<dbReference type="FunFam" id="2.60.40.10:FF:000294">
    <property type="entry name" value="Glucans biosynthesis protein G"/>
    <property type="match status" value="1"/>
</dbReference>
<dbReference type="FunFam" id="2.70.98.10:FF:000001">
    <property type="entry name" value="Glucans biosynthesis protein G"/>
    <property type="match status" value="1"/>
</dbReference>
<dbReference type="Gene3D" id="2.70.98.10">
    <property type="match status" value="1"/>
</dbReference>
<dbReference type="Gene3D" id="2.60.40.10">
    <property type="entry name" value="Immunoglobulins"/>
    <property type="match status" value="1"/>
</dbReference>
<dbReference type="HAMAP" id="MF_01069">
    <property type="entry name" value="MdoG_OpgG"/>
    <property type="match status" value="1"/>
</dbReference>
<dbReference type="InterPro" id="IPR011013">
    <property type="entry name" value="Gal_mutarotase_sf_dom"/>
</dbReference>
<dbReference type="InterPro" id="IPR014718">
    <property type="entry name" value="GH-type_carb-bd"/>
</dbReference>
<dbReference type="InterPro" id="IPR014438">
    <property type="entry name" value="Glucan_biosyn_MdoG/MdoD"/>
</dbReference>
<dbReference type="InterPro" id="IPR007444">
    <property type="entry name" value="Glucan_biosyn_MdoG_C"/>
</dbReference>
<dbReference type="InterPro" id="IPR013783">
    <property type="entry name" value="Ig-like_fold"/>
</dbReference>
<dbReference type="InterPro" id="IPR014756">
    <property type="entry name" value="Ig_E-set"/>
</dbReference>
<dbReference type="InterPro" id="IPR023704">
    <property type="entry name" value="MdoG_OpgG"/>
</dbReference>
<dbReference type="PANTHER" id="PTHR30504">
    <property type="entry name" value="GLUCANS BIOSYNTHESIS PROTEIN"/>
    <property type="match status" value="1"/>
</dbReference>
<dbReference type="PANTHER" id="PTHR30504:SF4">
    <property type="entry name" value="GLUCANS BIOSYNTHESIS PROTEIN G"/>
    <property type="match status" value="1"/>
</dbReference>
<dbReference type="Pfam" id="PF04349">
    <property type="entry name" value="MdoG"/>
    <property type="match status" value="1"/>
</dbReference>
<dbReference type="PIRSF" id="PIRSF006281">
    <property type="entry name" value="MdoG"/>
    <property type="match status" value="1"/>
</dbReference>
<dbReference type="SUPFAM" id="SSF81296">
    <property type="entry name" value="E set domains"/>
    <property type="match status" value="1"/>
</dbReference>
<dbReference type="SUPFAM" id="SSF74650">
    <property type="entry name" value="Galactose mutarotase-like"/>
    <property type="match status" value="1"/>
</dbReference>
<accession>P67557</accession>
<accession>Q8XFF6</accession>
<keyword id="KW-0574">Periplasm</keyword>
<keyword id="KW-1185">Reference proteome</keyword>
<keyword id="KW-0732">Signal</keyword>
<name>OPGG_SALTY</name>
<feature type="signal peptide" evidence="2">
    <location>
        <begin position="1"/>
        <end position="22"/>
    </location>
</feature>
<feature type="chain" id="PRO_0000020232" description="Glucans biosynthesis protein G">
    <location>
        <begin position="23"/>
        <end position="511"/>
    </location>
</feature>
<sequence>MMKMRWLGAAIMLTLYASSSWAFSIDDVAKQAQSLAGKGYEAPKSNLPSVFRDMKYADYQQIQFNSDKAYWNNLKTPFKLEFYHQGMYFDTPVKINEVTATTVKRIKYSPDYFNFGNVQHDKDTVKDLGFAGFKVLYPINSKDKNDEIVSMLGASYFRVIGAGQVYGLSARGLAIDTALPSGEEFPRFREFWIERPKPTDKRLTVYALLDSPRATGAYRFVIIPGRDTVVDVQSKVYLRDKVGKLGVAPLTSMFLFGPNQPSPTTNYRPELHDSNGLSIHAGNGEWIWRPLNNPKHLAVSSYAMENPQGFGLLQRGREFSRFEDLDDRYDLRPSAWITPKGDWGKGKVELVEIPTNDETNDNIVAYWTPDQLPEPGKEMNFKYTLTFSRDEDKLHAPDNAWVLQTRRSTGDVKQSNLIRQPDGTIAFVVDFVGADMKKLPPDTPVAAQTSIGDNGEIVDSNVRYNPVTKGWRLMLRVKVKDAKKTTEMRAALVNADQTLSETWSYQLPANE</sequence>